<accession>P46435</accession>
<accession>Q9NBV7</accession>
<reference key="1">
    <citation type="journal article" date="2000" name="Mol. Biochem. Parasitol.">
        <title>SmMAK16, the Schistosoma mansoni homologue of MAK16 from yeast, targets protein transport to the nucleolus.</title>
        <authorList>
            <person name="Milhon J.L."/>
            <person name="Albert T.J."/>
            <person name="Vande Waa E.A."/>
            <person name="O'Leary K.A."/>
            <person name="Jackson R.N."/>
            <person name="Kessler M.A."/>
            <person name="Schuler L.A."/>
            <person name="Tracy J.W."/>
        </authorList>
    </citation>
    <scope>NUCLEOTIDE SEQUENCE [GENOMIC DNA / MRNA]</scope>
    <scope>NUCLEOLAR LOCALIZATION</scope>
    <scope>PHOSPHORYLATION</scope>
</reference>
<reference key="2">
    <citation type="journal article" date="2003" name="Mol. Biochem. Parasitol.">
        <title>Ribosomal RNA processing and the role of SmMAK16 in ribosome biogenesis in Schistosoma mansoni.</title>
        <authorList>
            <person name="Capowski E.E."/>
            <person name="Tracy J.W."/>
        </authorList>
    </citation>
    <scope>FUNCTION</scope>
</reference>
<evidence type="ECO:0000255" key="1"/>
<evidence type="ECO:0000256" key="2">
    <source>
        <dbReference type="SAM" id="MobiDB-lite"/>
    </source>
</evidence>
<evidence type="ECO:0000269" key="3">
    <source>
    </source>
</evidence>
<evidence type="ECO:0000305" key="4"/>
<dbReference type="EMBL" id="AF243514">
    <property type="protein sequence ID" value="AAF78225.1"/>
    <property type="molecule type" value="Genomic_DNA"/>
</dbReference>
<dbReference type="EMBL" id="L06180">
    <property type="protein sequence ID" value="AAA29887.2"/>
    <property type="molecule type" value="mRNA"/>
</dbReference>
<dbReference type="RefSeq" id="XP_018645625.1">
    <property type="nucleotide sequence ID" value="XM_018791105.1"/>
</dbReference>
<dbReference type="SMR" id="P46435"/>
<dbReference type="FunCoup" id="P46435">
    <property type="interactions" value="2118"/>
</dbReference>
<dbReference type="STRING" id="6183.P46435"/>
<dbReference type="EnsemblMetazoa" id="Smp_050360.1">
    <property type="protein sequence ID" value="Smp_050360.1"/>
    <property type="gene ID" value="Smp_050360"/>
</dbReference>
<dbReference type="KEGG" id="smm:Smp_050360.1"/>
<dbReference type="WBParaSite" id="Smp_050360.1">
    <property type="protein sequence ID" value="Smp_050360.1"/>
    <property type="gene ID" value="Smp_050360"/>
</dbReference>
<dbReference type="CTD" id="8353295"/>
<dbReference type="eggNOG" id="KOG3064">
    <property type="taxonomic scope" value="Eukaryota"/>
</dbReference>
<dbReference type="HOGENOM" id="CLU_050888_2_0_1"/>
<dbReference type="InParanoid" id="P46435"/>
<dbReference type="OMA" id="CPLANTK"/>
<dbReference type="OrthoDB" id="10251342at2759"/>
<dbReference type="PhylomeDB" id="P46435"/>
<dbReference type="Proteomes" id="UP000008854">
    <property type="component" value="Unassembled WGS sequence"/>
</dbReference>
<dbReference type="ExpressionAtlas" id="P46435">
    <property type="expression patterns" value="baseline"/>
</dbReference>
<dbReference type="GO" id="GO:0005730">
    <property type="term" value="C:nucleolus"/>
    <property type="evidence" value="ECO:0007669"/>
    <property type="project" value="UniProtKB-SubCell"/>
</dbReference>
<dbReference type="GO" id="GO:0030687">
    <property type="term" value="C:preribosome, large subunit precursor"/>
    <property type="evidence" value="ECO:0007669"/>
    <property type="project" value="TreeGrafter"/>
</dbReference>
<dbReference type="GO" id="GO:0000460">
    <property type="term" value="P:maturation of 5.8S rRNA"/>
    <property type="evidence" value="ECO:0007669"/>
    <property type="project" value="TreeGrafter"/>
</dbReference>
<dbReference type="GO" id="GO:0000470">
    <property type="term" value="P:maturation of LSU-rRNA"/>
    <property type="evidence" value="ECO:0007669"/>
    <property type="project" value="TreeGrafter"/>
</dbReference>
<dbReference type="FunFam" id="3.30.390.110:FF:000001">
    <property type="entry name" value="Protein MAK16 homolog"/>
    <property type="match status" value="1"/>
</dbReference>
<dbReference type="Gene3D" id="3.30.390.110">
    <property type="match status" value="1"/>
</dbReference>
<dbReference type="InterPro" id="IPR006958">
    <property type="entry name" value="Mak16"/>
</dbReference>
<dbReference type="InterPro" id="IPR029004">
    <property type="entry name" value="Ribosomal_eL28/Mak16"/>
</dbReference>
<dbReference type="PANTHER" id="PTHR23405">
    <property type="entry name" value="MAINTENANCE OF KILLER 16 MAK16 PROTEIN-RELATED"/>
    <property type="match status" value="1"/>
</dbReference>
<dbReference type="PANTHER" id="PTHR23405:SF4">
    <property type="entry name" value="PROTEIN MAK16 HOMOLOG"/>
    <property type="match status" value="1"/>
</dbReference>
<dbReference type="Pfam" id="PF04874">
    <property type="entry name" value="Mak16"/>
    <property type="match status" value="1"/>
</dbReference>
<dbReference type="Pfam" id="PF01778">
    <property type="entry name" value="Ribosomal_L28e"/>
    <property type="match status" value="1"/>
</dbReference>
<dbReference type="PIRSF" id="PIRSF003352">
    <property type="entry name" value="MAK16"/>
    <property type="match status" value="1"/>
</dbReference>
<gene>
    <name type="primary">MAK16</name>
    <name type="synonym">GST-6</name>
</gene>
<proteinExistence type="evidence at protein level"/>
<name>MAK16_SCHMA</name>
<keyword id="KW-0539">Nucleus</keyword>
<keyword id="KW-0597">Phosphoprotein</keyword>
<keyword id="KW-1185">Reference proteome</keyword>
<keyword id="KW-0690">Ribosome biogenesis</keyword>
<protein>
    <recommendedName>
        <fullName>Protein MAK16 homolog</fullName>
    </recommendedName>
    <alternativeName>
        <fullName>SmMAK16</fullName>
    </alternativeName>
</protein>
<comment type="function">
    <text evidence="3">Involved in biogenesis of the 60S ribosomal subunit.</text>
</comment>
<comment type="subcellular location">
    <subcellularLocation>
        <location>Nucleus</location>
        <location>Nucleolus</location>
    </subcellularLocation>
</comment>
<comment type="similarity">
    <text evidence="4">Belongs to the MAK16 family.</text>
</comment>
<sequence>MNNDDVIWHTINHSFCSFVVKTKTGRFCRNDDNVTGLCNRHSCPLANSQYATIKERDGIIYLFVKEPERIPYPGKQWERIKLRRNKDQALKQIKEHLLYWDKWIISRVKQRFFRTREYLKNMRRLALSRQKKLEPINRTVEKRELRREAKALRVARIERTVEQELLERLRASTSSKEIYNIDQSAFEKALEAEEINEESDEEYEEDEEEIVYTSGSDVEDIEDIGVIDEESEEEEAEHNLVLTNPKKKRKVTIHYEKDE</sequence>
<organism>
    <name type="scientific">Schistosoma mansoni</name>
    <name type="common">Blood fluke</name>
    <dbReference type="NCBI Taxonomy" id="6183"/>
    <lineage>
        <taxon>Eukaryota</taxon>
        <taxon>Metazoa</taxon>
        <taxon>Spiralia</taxon>
        <taxon>Lophotrochozoa</taxon>
        <taxon>Platyhelminthes</taxon>
        <taxon>Trematoda</taxon>
        <taxon>Digenea</taxon>
        <taxon>Strigeidida</taxon>
        <taxon>Schistosomatoidea</taxon>
        <taxon>Schistosomatidae</taxon>
        <taxon>Schistosoma</taxon>
    </lineage>
</organism>
<feature type="chain" id="PRO_0000203792" description="Protein MAK16 homolog">
    <location>
        <begin position="1"/>
        <end position="259"/>
    </location>
</feature>
<feature type="region of interest" description="Nucleolar localization/retention signal">
    <location>
        <begin position="97"/>
        <end position="150"/>
    </location>
</feature>
<feature type="region of interest" description="Disordered" evidence="2">
    <location>
        <begin position="195"/>
        <end position="215"/>
    </location>
</feature>
<feature type="short sequence motif" description="Nuclear localization signal">
    <location>
        <begin position="245"/>
        <end position="251"/>
    </location>
</feature>
<feature type="compositionally biased region" description="Acidic residues" evidence="2">
    <location>
        <begin position="195"/>
        <end position="210"/>
    </location>
</feature>
<feature type="modified residue" description="Phosphoserine; by CK2" evidence="1">
    <location>
        <position position="199"/>
    </location>
</feature>
<feature type="modified residue" description="Phosphoserine; by CK2" evidence="1">
    <location>
        <position position="231"/>
    </location>
</feature>